<reference key="1">
    <citation type="journal article" date="1995" name="Science">
        <title>Whole-genome random sequencing and assembly of Haemophilus influenzae Rd.</title>
        <authorList>
            <person name="Fleischmann R.D."/>
            <person name="Adams M.D."/>
            <person name="White O."/>
            <person name="Clayton R.A."/>
            <person name="Kirkness E.F."/>
            <person name="Kerlavage A.R."/>
            <person name="Bult C.J."/>
            <person name="Tomb J.-F."/>
            <person name="Dougherty B.A."/>
            <person name="Merrick J.M."/>
            <person name="McKenney K."/>
            <person name="Sutton G.G."/>
            <person name="FitzHugh W."/>
            <person name="Fields C.A."/>
            <person name="Gocayne J.D."/>
            <person name="Scott J.D."/>
            <person name="Shirley R."/>
            <person name="Liu L.-I."/>
            <person name="Glodek A."/>
            <person name="Kelley J.M."/>
            <person name="Weidman J.F."/>
            <person name="Phillips C.A."/>
            <person name="Spriggs T."/>
            <person name="Hedblom E."/>
            <person name="Cotton M.D."/>
            <person name="Utterback T.R."/>
            <person name="Hanna M.C."/>
            <person name="Nguyen D.T."/>
            <person name="Saudek D.M."/>
            <person name="Brandon R.C."/>
            <person name="Fine L.D."/>
            <person name="Fritchman J.L."/>
            <person name="Fuhrmann J.L."/>
            <person name="Geoghagen N.S.M."/>
            <person name="Gnehm C.L."/>
            <person name="McDonald L.A."/>
            <person name="Small K.V."/>
            <person name="Fraser C.M."/>
            <person name="Smith H.O."/>
            <person name="Venter J.C."/>
        </authorList>
    </citation>
    <scope>NUCLEOTIDE SEQUENCE [LARGE SCALE GENOMIC DNA]</scope>
    <source>
        <strain>ATCC 51907 / DSM 11121 / KW20 / Rd</strain>
    </source>
</reference>
<reference key="2">
    <citation type="journal article" date="1996" name="Gene">
        <title>Sequences of the genes encoding the A, B and C subunits of the Haemophilus influenzae dimethylsulfoxide reductase complex.</title>
        <authorList>
            <person name="Loosmore S.M."/>
            <person name="Shortreed J.M."/>
            <person name="Coleman D.C."/>
            <person name="England D.M."/>
            <person name="Klein M.H."/>
        </authorList>
    </citation>
    <scope>NUCLEOTIDE SEQUENCE [GENOMIC DNA]</scope>
    <source>
        <strain>Eagan / Serotype B</strain>
    </source>
</reference>
<keyword id="KW-0004">4Fe-4S</keyword>
<keyword id="KW-1003">Cell membrane</keyword>
<keyword id="KW-0408">Iron</keyword>
<keyword id="KW-0411">Iron-sulfur</keyword>
<keyword id="KW-0472">Membrane</keyword>
<keyword id="KW-0479">Metal-binding</keyword>
<keyword id="KW-0500">Molybdenum</keyword>
<keyword id="KW-0560">Oxidoreductase</keyword>
<keyword id="KW-1185">Reference proteome</keyword>
<keyword id="KW-0732">Signal</keyword>
<evidence type="ECO:0000250" key="1"/>
<evidence type="ECO:0000255" key="2">
    <source>
        <dbReference type="PROSITE-ProRule" id="PRU00648"/>
    </source>
</evidence>
<evidence type="ECO:0000255" key="3">
    <source>
        <dbReference type="PROSITE-ProRule" id="PRU01004"/>
    </source>
</evidence>
<evidence type="ECO:0000256" key="4">
    <source>
        <dbReference type="SAM" id="MobiDB-lite"/>
    </source>
</evidence>
<evidence type="ECO:0000305" key="5"/>
<gene>
    <name type="primary">dmsA</name>
    <name type="ordered locus">HI_1047</name>
</gene>
<proteinExistence type="inferred from homology"/>
<dbReference type="EC" id="1.8.5.3"/>
<dbReference type="EMBL" id="L42023">
    <property type="protein sequence ID" value="AAC22706.1"/>
    <property type="molecule type" value="Genomic_DNA"/>
</dbReference>
<dbReference type="EMBL" id="U26665">
    <property type="protein sequence ID" value="AAB06233.1"/>
    <property type="molecule type" value="Genomic_DNA"/>
</dbReference>
<dbReference type="PIR" id="G64109">
    <property type="entry name" value="G64109"/>
</dbReference>
<dbReference type="RefSeq" id="NP_439206.1">
    <property type="nucleotide sequence ID" value="NC_000907.1"/>
</dbReference>
<dbReference type="SMR" id="P45004"/>
<dbReference type="STRING" id="71421.HI_1047"/>
<dbReference type="EnsemblBacteria" id="AAC22706">
    <property type="protein sequence ID" value="AAC22706"/>
    <property type="gene ID" value="HI_1047"/>
</dbReference>
<dbReference type="KEGG" id="hin:HI_1047"/>
<dbReference type="PATRIC" id="fig|71421.8.peg.1092"/>
<dbReference type="eggNOG" id="COG0243">
    <property type="taxonomic scope" value="Bacteria"/>
</dbReference>
<dbReference type="HOGENOM" id="CLU_000422_13_3_6"/>
<dbReference type="OrthoDB" id="9815647at2"/>
<dbReference type="PhylomeDB" id="P45004"/>
<dbReference type="BioCyc" id="HINF71421:G1GJ1-1086-MONOMER"/>
<dbReference type="PHI-base" id="PHI:11664"/>
<dbReference type="Proteomes" id="UP000000579">
    <property type="component" value="Chromosome"/>
</dbReference>
<dbReference type="GO" id="GO:0030288">
    <property type="term" value="C:outer membrane-bounded periplasmic space"/>
    <property type="evidence" value="ECO:0000318"/>
    <property type="project" value="GO_Central"/>
</dbReference>
<dbReference type="GO" id="GO:0005886">
    <property type="term" value="C:plasma membrane"/>
    <property type="evidence" value="ECO:0007669"/>
    <property type="project" value="UniProtKB-SubCell"/>
</dbReference>
<dbReference type="GO" id="GO:0051539">
    <property type="term" value="F:4 iron, 4 sulfur cluster binding"/>
    <property type="evidence" value="ECO:0007669"/>
    <property type="project" value="UniProtKB-KW"/>
</dbReference>
<dbReference type="GO" id="GO:0009389">
    <property type="term" value="F:dimethyl sulfoxide reductase activity"/>
    <property type="evidence" value="ECO:0007669"/>
    <property type="project" value="InterPro"/>
</dbReference>
<dbReference type="GO" id="GO:0009055">
    <property type="term" value="F:electron transfer activity"/>
    <property type="evidence" value="ECO:0000318"/>
    <property type="project" value="GO_Central"/>
</dbReference>
<dbReference type="GO" id="GO:0030151">
    <property type="term" value="F:molybdenum ion binding"/>
    <property type="evidence" value="ECO:0000318"/>
    <property type="project" value="GO_Central"/>
</dbReference>
<dbReference type="GO" id="GO:0043546">
    <property type="term" value="F:molybdopterin cofactor binding"/>
    <property type="evidence" value="ECO:0007669"/>
    <property type="project" value="InterPro"/>
</dbReference>
<dbReference type="GO" id="GO:0009061">
    <property type="term" value="P:anaerobic respiration"/>
    <property type="evidence" value="ECO:0000318"/>
    <property type="project" value="GO_Central"/>
</dbReference>
<dbReference type="CDD" id="cd02794">
    <property type="entry name" value="MopB_CT_DmsA-EC"/>
    <property type="match status" value="1"/>
</dbReference>
<dbReference type="CDD" id="cd02770">
    <property type="entry name" value="MopB_DmsA-EC"/>
    <property type="match status" value="1"/>
</dbReference>
<dbReference type="FunFam" id="2.40.40.20:FF:000010">
    <property type="entry name" value="Anaerobic dimethyl sulfoxide reductase subunit A"/>
    <property type="match status" value="1"/>
</dbReference>
<dbReference type="FunFam" id="3.40.228.10:FF:000004">
    <property type="entry name" value="Dimethyl sulfoxide reductase subunit A"/>
    <property type="match status" value="1"/>
</dbReference>
<dbReference type="Gene3D" id="2.40.40.20">
    <property type="match status" value="1"/>
</dbReference>
<dbReference type="Gene3D" id="3.40.50.740">
    <property type="match status" value="2"/>
</dbReference>
<dbReference type="Gene3D" id="2.20.25.90">
    <property type="entry name" value="ADC-like domains"/>
    <property type="match status" value="1"/>
</dbReference>
<dbReference type="Gene3D" id="3.40.228.10">
    <property type="entry name" value="Dimethylsulfoxide Reductase, domain 2"/>
    <property type="match status" value="1"/>
</dbReference>
<dbReference type="InterPro" id="IPR011888">
    <property type="entry name" value="Anaer_DMSO_reductase"/>
</dbReference>
<dbReference type="InterPro" id="IPR009010">
    <property type="entry name" value="Asp_de-COase-like_dom_sf"/>
</dbReference>
<dbReference type="InterPro" id="IPR006657">
    <property type="entry name" value="MoPterin_dinucl-bd_dom"/>
</dbReference>
<dbReference type="InterPro" id="IPR006656">
    <property type="entry name" value="Mopterin_OxRdtase"/>
</dbReference>
<dbReference type="InterPro" id="IPR006963">
    <property type="entry name" value="Mopterin_OxRdtase_4Fe-4S_dom"/>
</dbReference>
<dbReference type="InterPro" id="IPR006655">
    <property type="entry name" value="Mopterin_OxRdtase_prok_CS"/>
</dbReference>
<dbReference type="InterPro" id="IPR027467">
    <property type="entry name" value="MopterinOxRdtase_cofactor_BS"/>
</dbReference>
<dbReference type="InterPro" id="IPR050612">
    <property type="entry name" value="Prok_Mopterin_Oxidored"/>
</dbReference>
<dbReference type="InterPro" id="IPR006311">
    <property type="entry name" value="TAT_signal"/>
</dbReference>
<dbReference type="InterPro" id="IPR019546">
    <property type="entry name" value="TAT_signal_bac_arc"/>
</dbReference>
<dbReference type="NCBIfam" id="TIGR02166">
    <property type="entry name" value="dmsA_ynfE"/>
    <property type="match status" value="1"/>
</dbReference>
<dbReference type="NCBIfam" id="TIGR01409">
    <property type="entry name" value="TAT_signal_seq"/>
    <property type="match status" value="1"/>
</dbReference>
<dbReference type="PANTHER" id="PTHR43742:SF3">
    <property type="entry name" value="DIMETHYL SULFOXIDE REDUCTASE DMSA"/>
    <property type="match status" value="1"/>
</dbReference>
<dbReference type="PANTHER" id="PTHR43742">
    <property type="entry name" value="TRIMETHYLAMINE-N-OXIDE REDUCTASE"/>
    <property type="match status" value="1"/>
</dbReference>
<dbReference type="Pfam" id="PF04879">
    <property type="entry name" value="Molybdop_Fe4S4"/>
    <property type="match status" value="1"/>
</dbReference>
<dbReference type="Pfam" id="PF00384">
    <property type="entry name" value="Molybdopterin"/>
    <property type="match status" value="1"/>
</dbReference>
<dbReference type="Pfam" id="PF01568">
    <property type="entry name" value="Molydop_binding"/>
    <property type="match status" value="1"/>
</dbReference>
<dbReference type="SMART" id="SM00926">
    <property type="entry name" value="Molybdop_Fe4S4"/>
    <property type="match status" value="1"/>
</dbReference>
<dbReference type="SUPFAM" id="SSF50692">
    <property type="entry name" value="ADC-like"/>
    <property type="match status" value="1"/>
</dbReference>
<dbReference type="SUPFAM" id="SSF53706">
    <property type="entry name" value="Formate dehydrogenase/DMSO reductase, domains 1-3"/>
    <property type="match status" value="1"/>
</dbReference>
<dbReference type="PROSITE" id="PS51669">
    <property type="entry name" value="4FE4S_MOW_BIS_MGD"/>
    <property type="match status" value="1"/>
</dbReference>
<dbReference type="PROSITE" id="PS00551">
    <property type="entry name" value="MOLYBDOPTERIN_PROK_1"/>
    <property type="match status" value="1"/>
</dbReference>
<dbReference type="PROSITE" id="PS00490">
    <property type="entry name" value="MOLYBDOPTERIN_PROK_2"/>
    <property type="match status" value="1"/>
</dbReference>
<dbReference type="PROSITE" id="PS00932">
    <property type="entry name" value="MOLYBDOPTERIN_PROK_3"/>
    <property type="match status" value="1"/>
</dbReference>
<dbReference type="PROSITE" id="PS51318">
    <property type="entry name" value="TAT"/>
    <property type="match status" value="1"/>
</dbReference>
<name>DMSA_HAEIN</name>
<accession>P45004</accession>
<accession>Q48048</accession>
<feature type="signal peptide" description="Tat-type signal" evidence="2">
    <location>
        <begin position="1"/>
        <end position="35"/>
    </location>
</feature>
<feature type="chain" id="PRO_0000019144" description="Dimethyl sulfoxide reductase DmsA">
    <location>
        <begin position="36"/>
        <end position="806"/>
    </location>
</feature>
<feature type="domain" description="4Fe-4S Mo/W bis-MGD-type" evidence="3">
    <location>
        <begin position="47"/>
        <end position="109"/>
    </location>
</feature>
<feature type="region of interest" description="Disordered" evidence="4">
    <location>
        <begin position="786"/>
        <end position="806"/>
    </location>
</feature>
<feature type="compositionally biased region" description="Polar residues" evidence="4">
    <location>
        <begin position="795"/>
        <end position="806"/>
    </location>
</feature>
<feature type="binding site" evidence="3">
    <location>
        <position position="54"/>
    </location>
    <ligand>
        <name>[4Fe-4S] cluster</name>
        <dbReference type="ChEBI" id="CHEBI:49883"/>
    </ligand>
</feature>
<feature type="binding site" evidence="3">
    <location>
        <position position="58"/>
    </location>
    <ligand>
        <name>[4Fe-4S] cluster</name>
        <dbReference type="ChEBI" id="CHEBI:49883"/>
    </ligand>
</feature>
<feature type="binding site" evidence="3">
    <location>
        <position position="62"/>
    </location>
    <ligand>
        <name>[4Fe-4S] cluster</name>
        <dbReference type="ChEBI" id="CHEBI:49883"/>
    </ligand>
</feature>
<feature type="binding site" evidence="3">
    <location>
        <position position="95"/>
    </location>
    <ligand>
        <name>[4Fe-4S] cluster</name>
        <dbReference type="ChEBI" id="CHEBI:49883"/>
    </ligand>
</feature>
<feature type="binding site" evidence="1">
    <location>
        <begin position="163"/>
        <end position="167"/>
    </location>
    <ligand>
        <name>Mo-bis(molybdopterin guanine dinucleotide)</name>
        <dbReference type="ChEBI" id="CHEBI:60539"/>
    </ligand>
</feature>
<feature type="binding site" evidence="1">
    <location>
        <position position="196"/>
    </location>
    <ligand>
        <name>Mo-bis(molybdopterin guanine dinucleotide)</name>
        <dbReference type="ChEBI" id="CHEBI:60539"/>
    </ligand>
    <ligandPart>
        <name>Mo</name>
        <dbReference type="ChEBI" id="CHEBI:28685"/>
    </ligandPart>
</feature>
<feature type="binding site" evidence="1">
    <location>
        <begin position="236"/>
        <end position="237"/>
    </location>
    <ligand>
        <name>Mo-bis(molybdopterin guanine dinucleotide)</name>
        <dbReference type="ChEBI" id="CHEBI:60539"/>
    </ligand>
</feature>
<feature type="binding site" evidence="1">
    <location>
        <begin position="262"/>
        <end position="263"/>
    </location>
    <ligand>
        <name>Mo-bis(molybdopterin guanine dinucleotide)</name>
        <dbReference type="ChEBI" id="CHEBI:60539"/>
    </ligand>
</feature>
<feature type="binding site" evidence="1">
    <location>
        <begin position="283"/>
        <end position="285"/>
    </location>
    <ligand>
        <name>Mo-bis(molybdopterin guanine dinucleotide)</name>
        <dbReference type="ChEBI" id="CHEBI:60539"/>
    </ligand>
</feature>
<feature type="binding site" evidence="1">
    <location>
        <begin position="378"/>
        <end position="379"/>
    </location>
    <ligand>
        <name>Mo-bis(molybdopterin guanine dinucleotide)</name>
        <dbReference type="ChEBI" id="CHEBI:60539"/>
    </ligand>
</feature>
<feature type="binding site" evidence="1">
    <location>
        <position position="382"/>
    </location>
    <ligand>
        <name>Mo-bis(molybdopterin guanine dinucleotide)</name>
        <dbReference type="ChEBI" id="CHEBI:60539"/>
    </ligand>
</feature>
<feature type="binding site" evidence="1">
    <location>
        <position position="480"/>
    </location>
    <ligand>
        <name>Mo-bis(molybdopterin guanine dinucleotide)</name>
        <dbReference type="ChEBI" id="CHEBI:60539"/>
    </ligand>
</feature>
<feature type="binding site" evidence="1">
    <location>
        <begin position="504"/>
        <end position="505"/>
    </location>
    <ligand>
        <name>Mo-bis(molybdopterin guanine dinucleotide)</name>
        <dbReference type="ChEBI" id="CHEBI:60539"/>
    </ligand>
</feature>
<feature type="binding site" evidence="1">
    <location>
        <position position="693"/>
    </location>
    <ligand>
        <name>Mo-bis(molybdopterin guanine dinucleotide)</name>
        <dbReference type="ChEBI" id="CHEBI:60539"/>
    </ligand>
</feature>
<feature type="binding site" evidence="1">
    <location>
        <begin position="699"/>
        <end position="701"/>
    </location>
    <ligand>
        <name>Mo-bis(molybdopterin guanine dinucleotide)</name>
        <dbReference type="ChEBI" id="CHEBI:60539"/>
    </ligand>
</feature>
<feature type="binding site" evidence="1">
    <location>
        <position position="780"/>
    </location>
    <ligand>
        <name>Mo-bis(molybdopterin guanine dinucleotide)</name>
        <dbReference type="ChEBI" id="CHEBI:60539"/>
    </ligand>
</feature>
<feature type="binding site" evidence="1">
    <location>
        <begin position="796"/>
        <end position="797"/>
    </location>
    <ligand>
        <name>Mo-bis(molybdopterin guanine dinucleotide)</name>
        <dbReference type="ChEBI" id="CHEBI:60539"/>
    </ligand>
</feature>
<feature type="sequence variant" description="In strain: Eagan.">
    <original>D</original>
    <variation>Y</variation>
    <location>
        <position position="140"/>
    </location>
</feature>
<feature type="sequence variant" description="In strain: Eagan.">
    <original>T</original>
    <variation>A</variation>
    <location>
        <position position="321"/>
    </location>
</feature>
<feature type="sequence variant" description="In strain: Eagan.">
    <original>V</original>
    <variation>M</variation>
    <location>
        <position position="431"/>
    </location>
</feature>
<feature type="sequence variant" description="In strain: Eagan.">
    <original>W</original>
    <variation>G</variation>
    <location>
        <position position="440"/>
    </location>
</feature>
<feature type="sequence variant" description="In strain: Eagan.">
    <original>S</original>
    <variation>P</variation>
    <location>
        <position position="465"/>
    </location>
</feature>
<feature type="sequence variant" description="In strain: Eagan.">
    <original>T</original>
    <variation>P</variation>
    <location>
        <position position="523"/>
    </location>
</feature>
<feature type="sequence variant" description="In strain: Eagan.">
    <original>E</original>
    <variation>K</variation>
    <location>
        <position position="724"/>
    </location>
</feature>
<organism>
    <name type="scientific">Haemophilus influenzae (strain ATCC 51907 / DSM 11121 / KW20 / Rd)</name>
    <dbReference type="NCBI Taxonomy" id="71421"/>
    <lineage>
        <taxon>Bacteria</taxon>
        <taxon>Pseudomonadati</taxon>
        <taxon>Pseudomonadota</taxon>
        <taxon>Gammaproteobacteria</taxon>
        <taxon>Pasteurellales</taxon>
        <taxon>Pasteurellaceae</taxon>
        <taxon>Haemophilus</taxon>
    </lineage>
</organism>
<protein>
    <recommendedName>
        <fullName>Dimethyl sulfoxide reductase DmsA</fullName>
        <shortName>DMSO reductase</shortName>
        <shortName>DMSOR</shortName>
        <shortName>Me2SO reductase</shortName>
        <ecNumber>1.8.5.3</ecNumber>
    </recommendedName>
</protein>
<sequence>MSNFNQISRRDFVKASSAGAALAVSNLTLPFNVMAKETQRLNENNQERIVWSACTVNCGSRCPLRMHVKDNRITYVETDNTGTETYNLDHQVRACLRGRSMRRRVYNPDRLKYPMKRIGKRGEGKFKRISWDEALTEIADALKRNIKKYGNESIYLNYGTGTLGGTMAKSWPPASTMIARFMNCIGGYLNHYGDYSTAQIAVGLDYTYGGGWALGNGMADIENTKLIVLFGNNPAETRMSGGGLTYCIEQAKARSNAKMIIIDPRYNDTGAGREDEWIPIRPGTDAALVAALAYVMIQENLVDQPFLDKYCVGYDEKTLPTDAPKNGHYKAYILGYGNDGIAKTPEWAAKITGIPAERIIKLAREIGSTKPAFISQGWGPQRRSNGELISRAIAMLPILTGNVGIHGGNTGARESAYSIPFVRMPTLKNPVKASIPMFLWTDAIIRGTEMTALTDGIRGVDKLSSPIKVIWNYASNCLINQHAQINRTHDILQDDTQCEMIITIDNHMTSTAKYSDILLPDCTTSEQMDFALDAFVSNMAYVIFADQVIKPSFECRPIYDMLSDLAEKMGVKEKFTEGRTQEEWLRHIYEQSREKLPELPTFEEFRQQGIFKKVDPNGFKVAYKDFRDNPEAHPLKTPSGKIEIYSSRLAEIAKTWKLAEDDVIHPLPIHAQSFEHYGDPLMEKYPLQLSGFHYKARTHSTYGNVDVLKAANPQEVWMNPIDAEPRNIKNGDMIRIFNDRGEVHINVKITPRIIPGVVALSEGAWYAPDKDRIDHSGCINVLTTQRPSPLAKGNPQHSNLVQVERL</sequence>
<comment type="function">
    <text evidence="1">Catalyzes the reduction of dimethyl sulfoxide (DMSO) to dimethyl sulfide (DMS). The terminal DMSO reductase can also use various sulfoxides and N-oxide compounds as terminal electron acceptor in addition to DMSO (By similarity).</text>
</comment>
<comment type="catalytic activity">
    <reaction>
        <text>dimethyl sulfide + a menaquinone + H2O = dimethyl sulfoxide + a menaquinol</text>
        <dbReference type="Rhea" id="RHEA:28494"/>
        <dbReference type="Rhea" id="RHEA-COMP:9537"/>
        <dbReference type="Rhea" id="RHEA-COMP:9539"/>
        <dbReference type="ChEBI" id="CHEBI:15377"/>
        <dbReference type="ChEBI" id="CHEBI:16374"/>
        <dbReference type="ChEBI" id="CHEBI:17437"/>
        <dbReference type="ChEBI" id="CHEBI:18151"/>
        <dbReference type="ChEBI" id="CHEBI:28262"/>
        <dbReference type="EC" id="1.8.5.3"/>
    </reaction>
</comment>
<comment type="cofactor">
    <cofactor evidence="5">
        <name>[4Fe-4S] cluster</name>
        <dbReference type="ChEBI" id="CHEBI:49883"/>
    </cofactor>
    <text evidence="5">Binds 1 [4Fe-4S] cluster.</text>
</comment>
<comment type="cofactor">
    <cofactor evidence="1">
        <name>Mo-bis(molybdopterin guanine dinucleotide)</name>
        <dbReference type="ChEBI" id="CHEBI:60539"/>
    </cofactor>
    <text evidence="1">Binds 1 molybdenum-bis(molybdopterin guanine dinucleotide) (Mo-bis-MGD) cofactor per subunit.</text>
</comment>
<comment type="subunit">
    <text evidence="1">Heterotrimeric enzyme composed of a catalytic heterodimer (DmsAB) and a membrane anchor protein (DmsC).</text>
</comment>
<comment type="subcellular location">
    <subcellularLocation>
        <location evidence="1">Cell membrane</location>
        <topology evidence="1">Peripheral membrane protein</topology>
        <orientation evidence="1">Cytoplasmic side</orientation>
    </subcellularLocation>
</comment>
<comment type="PTM">
    <text>Predicted to be exported by the Tat system. The position of the signal peptide cleavage has not been experimentally proven.</text>
</comment>
<comment type="miscellaneous">
    <text evidence="1">The Tat signal sequence is essential for the expression of dmsA, the stability of the dmsAB dimer and membrane targeting. Despite the presence of a signal sequence, dmsA is not exported to the periplasm (By similarity).</text>
</comment>
<comment type="similarity">
    <text evidence="5">Belongs to the prokaryotic molybdopterin-containing oxidoreductase family.</text>
</comment>